<protein>
    <recommendedName>
        <fullName evidence="2">Translation initiation factor IF-2</fullName>
    </recommendedName>
</protein>
<comment type="function">
    <text evidence="2">One of the essential components for the initiation of protein synthesis. Protects formylmethionyl-tRNA from spontaneous hydrolysis and promotes its binding to the 30S ribosomal subunits. Also involved in the hydrolysis of GTP during the formation of the 70S ribosomal complex.</text>
</comment>
<comment type="subcellular location">
    <subcellularLocation>
        <location evidence="2">Cytoplasm</location>
    </subcellularLocation>
</comment>
<comment type="similarity">
    <text evidence="2">Belongs to the TRAFAC class translation factor GTPase superfamily. Classic translation factor GTPase family. IF-2 subfamily.</text>
</comment>
<organism>
    <name type="scientific">Prochlorococcus marinus (strain MIT 9211)</name>
    <dbReference type="NCBI Taxonomy" id="93059"/>
    <lineage>
        <taxon>Bacteria</taxon>
        <taxon>Bacillati</taxon>
        <taxon>Cyanobacteriota</taxon>
        <taxon>Cyanophyceae</taxon>
        <taxon>Synechococcales</taxon>
        <taxon>Prochlorococcaceae</taxon>
        <taxon>Prochlorococcus</taxon>
    </lineage>
</organism>
<accession>A9BCI5</accession>
<reference key="1">
    <citation type="journal article" date="2007" name="PLoS Genet.">
        <title>Patterns and implications of gene gain and loss in the evolution of Prochlorococcus.</title>
        <authorList>
            <person name="Kettler G.C."/>
            <person name="Martiny A.C."/>
            <person name="Huang K."/>
            <person name="Zucker J."/>
            <person name="Coleman M.L."/>
            <person name="Rodrigue S."/>
            <person name="Chen F."/>
            <person name="Lapidus A."/>
            <person name="Ferriera S."/>
            <person name="Johnson J."/>
            <person name="Steglich C."/>
            <person name="Church G.M."/>
            <person name="Richardson P."/>
            <person name="Chisholm S.W."/>
        </authorList>
    </citation>
    <scope>NUCLEOTIDE SEQUENCE [LARGE SCALE GENOMIC DNA]</scope>
    <source>
        <strain>MIT 9211</strain>
    </source>
</reference>
<dbReference type="EMBL" id="CP000878">
    <property type="protein sequence ID" value="ABX09547.1"/>
    <property type="molecule type" value="Genomic_DNA"/>
</dbReference>
<dbReference type="RefSeq" id="WP_012196168.1">
    <property type="nucleotide sequence ID" value="NC_009976.1"/>
</dbReference>
<dbReference type="SMR" id="A9BCI5"/>
<dbReference type="STRING" id="93059.P9211_16161"/>
<dbReference type="KEGG" id="pmj:P9211_16161"/>
<dbReference type="eggNOG" id="COG0532">
    <property type="taxonomic scope" value="Bacteria"/>
</dbReference>
<dbReference type="HOGENOM" id="CLU_006301_5_1_3"/>
<dbReference type="OrthoDB" id="9811804at2"/>
<dbReference type="Proteomes" id="UP000000788">
    <property type="component" value="Chromosome"/>
</dbReference>
<dbReference type="GO" id="GO:0005829">
    <property type="term" value="C:cytosol"/>
    <property type="evidence" value="ECO:0007669"/>
    <property type="project" value="TreeGrafter"/>
</dbReference>
<dbReference type="GO" id="GO:0005525">
    <property type="term" value="F:GTP binding"/>
    <property type="evidence" value="ECO:0007669"/>
    <property type="project" value="UniProtKB-KW"/>
</dbReference>
<dbReference type="GO" id="GO:0003924">
    <property type="term" value="F:GTPase activity"/>
    <property type="evidence" value="ECO:0007669"/>
    <property type="project" value="UniProtKB-UniRule"/>
</dbReference>
<dbReference type="GO" id="GO:0003743">
    <property type="term" value="F:translation initiation factor activity"/>
    <property type="evidence" value="ECO:0007669"/>
    <property type="project" value="UniProtKB-UniRule"/>
</dbReference>
<dbReference type="CDD" id="cd01887">
    <property type="entry name" value="IF2_eIF5B"/>
    <property type="match status" value="1"/>
</dbReference>
<dbReference type="CDD" id="cd03702">
    <property type="entry name" value="IF2_mtIF2_II"/>
    <property type="match status" value="1"/>
</dbReference>
<dbReference type="CDD" id="cd03692">
    <property type="entry name" value="mtIF2_IVc"/>
    <property type="match status" value="1"/>
</dbReference>
<dbReference type="FunFam" id="2.40.30.10:FF:000007">
    <property type="entry name" value="Translation initiation factor IF-2"/>
    <property type="match status" value="1"/>
</dbReference>
<dbReference type="FunFam" id="2.40.30.10:FF:000008">
    <property type="entry name" value="Translation initiation factor IF-2"/>
    <property type="match status" value="1"/>
</dbReference>
<dbReference type="FunFam" id="3.40.50.10050:FF:000001">
    <property type="entry name" value="Translation initiation factor IF-2"/>
    <property type="match status" value="1"/>
</dbReference>
<dbReference type="FunFam" id="3.40.50.300:FF:000019">
    <property type="entry name" value="Translation initiation factor IF-2"/>
    <property type="match status" value="1"/>
</dbReference>
<dbReference type="Gene3D" id="1.10.10.2480">
    <property type="match status" value="1"/>
</dbReference>
<dbReference type="Gene3D" id="3.40.50.300">
    <property type="entry name" value="P-loop containing nucleotide triphosphate hydrolases"/>
    <property type="match status" value="1"/>
</dbReference>
<dbReference type="Gene3D" id="2.40.30.10">
    <property type="entry name" value="Translation factors"/>
    <property type="match status" value="2"/>
</dbReference>
<dbReference type="Gene3D" id="3.40.50.10050">
    <property type="entry name" value="Translation initiation factor IF- 2, domain 3"/>
    <property type="match status" value="1"/>
</dbReference>
<dbReference type="HAMAP" id="MF_00100_B">
    <property type="entry name" value="IF_2_B"/>
    <property type="match status" value="1"/>
</dbReference>
<dbReference type="InterPro" id="IPR053905">
    <property type="entry name" value="EF-G-like_DII"/>
</dbReference>
<dbReference type="InterPro" id="IPR044145">
    <property type="entry name" value="IF2_II"/>
</dbReference>
<dbReference type="InterPro" id="IPR006847">
    <property type="entry name" value="IF2_N"/>
</dbReference>
<dbReference type="InterPro" id="IPR027417">
    <property type="entry name" value="P-loop_NTPase"/>
</dbReference>
<dbReference type="InterPro" id="IPR005225">
    <property type="entry name" value="Small_GTP-bd"/>
</dbReference>
<dbReference type="InterPro" id="IPR000795">
    <property type="entry name" value="T_Tr_GTP-bd_dom"/>
</dbReference>
<dbReference type="InterPro" id="IPR000178">
    <property type="entry name" value="TF_IF2_bacterial-like"/>
</dbReference>
<dbReference type="InterPro" id="IPR015760">
    <property type="entry name" value="TIF_IF2"/>
</dbReference>
<dbReference type="InterPro" id="IPR023115">
    <property type="entry name" value="TIF_IF2_dom3"/>
</dbReference>
<dbReference type="InterPro" id="IPR036925">
    <property type="entry name" value="TIF_IF2_dom3_sf"/>
</dbReference>
<dbReference type="InterPro" id="IPR009000">
    <property type="entry name" value="Transl_B-barrel_sf"/>
</dbReference>
<dbReference type="NCBIfam" id="TIGR00487">
    <property type="entry name" value="IF-2"/>
    <property type="match status" value="1"/>
</dbReference>
<dbReference type="NCBIfam" id="TIGR00231">
    <property type="entry name" value="small_GTP"/>
    <property type="match status" value="1"/>
</dbReference>
<dbReference type="PANTHER" id="PTHR43381:SF5">
    <property type="entry name" value="TR-TYPE G DOMAIN-CONTAINING PROTEIN"/>
    <property type="match status" value="1"/>
</dbReference>
<dbReference type="PANTHER" id="PTHR43381">
    <property type="entry name" value="TRANSLATION INITIATION FACTOR IF-2-RELATED"/>
    <property type="match status" value="1"/>
</dbReference>
<dbReference type="Pfam" id="PF22042">
    <property type="entry name" value="EF-G_D2"/>
    <property type="match status" value="1"/>
</dbReference>
<dbReference type="Pfam" id="PF00009">
    <property type="entry name" value="GTP_EFTU"/>
    <property type="match status" value="1"/>
</dbReference>
<dbReference type="Pfam" id="PF11987">
    <property type="entry name" value="IF-2"/>
    <property type="match status" value="1"/>
</dbReference>
<dbReference type="Pfam" id="PF04760">
    <property type="entry name" value="IF2_N"/>
    <property type="match status" value="2"/>
</dbReference>
<dbReference type="PRINTS" id="PR00315">
    <property type="entry name" value="ELONGATNFCT"/>
</dbReference>
<dbReference type="SUPFAM" id="SSF52156">
    <property type="entry name" value="Initiation factor IF2/eIF5b, domain 3"/>
    <property type="match status" value="1"/>
</dbReference>
<dbReference type="SUPFAM" id="SSF52540">
    <property type="entry name" value="P-loop containing nucleoside triphosphate hydrolases"/>
    <property type="match status" value="1"/>
</dbReference>
<dbReference type="SUPFAM" id="SSF50447">
    <property type="entry name" value="Translation proteins"/>
    <property type="match status" value="2"/>
</dbReference>
<dbReference type="PROSITE" id="PS51722">
    <property type="entry name" value="G_TR_2"/>
    <property type="match status" value="1"/>
</dbReference>
<dbReference type="PROSITE" id="PS01176">
    <property type="entry name" value="IF2"/>
    <property type="match status" value="1"/>
</dbReference>
<feature type="chain" id="PRO_1000093813" description="Translation initiation factor IF-2">
    <location>
        <begin position="1"/>
        <end position="1113"/>
    </location>
</feature>
<feature type="domain" description="tr-type G">
    <location>
        <begin position="605"/>
        <end position="777"/>
    </location>
</feature>
<feature type="region of interest" description="Disordered" evidence="3">
    <location>
        <begin position="56"/>
        <end position="446"/>
    </location>
</feature>
<feature type="region of interest" description="Disordered" evidence="3">
    <location>
        <begin position="470"/>
        <end position="504"/>
    </location>
</feature>
<feature type="region of interest" description="G1" evidence="1">
    <location>
        <begin position="614"/>
        <end position="621"/>
    </location>
</feature>
<feature type="region of interest" description="G2" evidence="1">
    <location>
        <begin position="639"/>
        <end position="643"/>
    </location>
</feature>
<feature type="region of interest" description="G3" evidence="1">
    <location>
        <begin position="664"/>
        <end position="667"/>
    </location>
</feature>
<feature type="region of interest" description="G4" evidence="1">
    <location>
        <begin position="718"/>
        <end position="721"/>
    </location>
</feature>
<feature type="region of interest" description="G5" evidence="1">
    <location>
        <begin position="754"/>
        <end position="756"/>
    </location>
</feature>
<feature type="compositionally biased region" description="Polar residues" evidence="3">
    <location>
        <begin position="56"/>
        <end position="72"/>
    </location>
</feature>
<feature type="compositionally biased region" description="Polar residues" evidence="3">
    <location>
        <begin position="129"/>
        <end position="139"/>
    </location>
</feature>
<feature type="compositionally biased region" description="Polar residues" evidence="3">
    <location>
        <begin position="162"/>
        <end position="187"/>
    </location>
</feature>
<feature type="compositionally biased region" description="Polar residues" evidence="3">
    <location>
        <begin position="194"/>
        <end position="205"/>
    </location>
</feature>
<feature type="compositionally biased region" description="Low complexity" evidence="3">
    <location>
        <begin position="248"/>
        <end position="265"/>
    </location>
</feature>
<feature type="compositionally biased region" description="Basic and acidic residues" evidence="3">
    <location>
        <begin position="415"/>
        <end position="429"/>
    </location>
</feature>
<feature type="compositionally biased region" description="Basic residues" evidence="3">
    <location>
        <begin position="474"/>
        <end position="483"/>
    </location>
</feature>
<feature type="compositionally biased region" description="Basic residues" evidence="3">
    <location>
        <begin position="490"/>
        <end position="504"/>
    </location>
</feature>
<feature type="binding site" evidence="2">
    <location>
        <begin position="614"/>
        <end position="621"/>
    </location>
    <ligand>
        <name>GTP</name>
        <dbReference type="ChEBI" id="CHEBI:37565"/>
    </ligand>
</feature>
<feature type="binding site" evidence="2">
    <location>
        <begin position="664"/>
        <end position="668"/>
    </location>
    <ligand>
        <name>GTP</name>
        <dbReference type="ChEBI" id="CHEBI:37565"/>
    </ligand>
</feature>
<feature type="binding site" evidence="2">
    <location>
        <begin position="718"/>
        <end position="721"/>
    </location>
    <ligand>
        <name>GTP</name>
        <dbReference type="ChEBI" id="CHEBI:37565"/>
    </ligand>
</feature>
<name>IF2_PROM4</name>
<gene>
    <name evidence="2" type="primary">infB</name>
    <name type="ordered locus">P9211_16161</name>
</gene>
<proteinExistence type="inferred from homology"/>
<sequence>MTSSGKIRIYELSRDLNLENKDVLNAAKKLSIPAKSHSSSISNAEANEIKAFLNKQSNQSINNKTKQNSSKEILSLKKAGSKPIKDEITKKKANLPPKASAESQSSKPRIETSKAPVAPIKPIKEPVQKANTSNQSKGVINNLIQPQKPSPLQPKQPKSIHLENNASKQNIEDNNNFQERSPRTQLVQKPPLPTKNNEPPQQKTSIPKRPITPPARPSKPILDNRSSVKSRPIIEAPRKKTGPDRNSPVQPRTQNNQNRQRIPNKPGKPPLRGNPPVELVGAPIRRSNKPNNNVKGPRDGGYRPGPPNRNDPSNQQGHVKRDIKAPIRQRPGMPPGMRKPVAPGELMQLQKPTGRSQPPAPRRVGAPAPPSQRADSTKDRQGKSPGAKQPVNRPTPATAPKKPSHRPPGSGPTKRRSDWDDAAKLEALRNKAPQKQRQKVHIIGENDDALTTETSGFAAEQEAMVLSASLARPAKPKSTKKSNSKATVVTRKRKKESTRQRQRRRAMELRAAREAKQVRPEMIIIPEGNLTVQELADKLSVESSEIIKSLFFKGITATVTQSLDLSTIETVAEEFGVPVLQDDIEEAATKTAEMLDEADKDHLIRRPPVVTVMGHVDHGKTSLLDAIRKARVASGEAGGITQHIGAYQVELEHEKKKRKLTFLDTPGHEAFTAMRARGTKVTDVAVLVVAADDGVRPQTLEAISHARAAKVPIVVAINKIDKEGASPDRVKQELSEQELVAEEWGGEVVMVPVSAIKGENIDKLLEMVLLVTEVEDLQANPDRLAKGTVIEAHLDKAKGPVATLLIQNGTLKSGDVLAAGPVLGKVRAMVDENGIRLKEAGPSCPVEALGFNEVPTAGDEFEVYPDEKSARAVVGDRASDARATRLAQQMASRRVSLSSMSGQANEGDLKELNIILKADVQGSIEAILGSLEQLPKDEVQVRVLLSAPGEVTETDVDLAAASGAVIVGFNTSMASGAKKAADANSVDVRDYEVIYKLLEDIQLAMEGLLEPDMVEESLGEAEVRAIFSIGKSAVAGCYITNGKLQRNCKVRVKRGSQIVFEGDLDSLRRNKDVVKDVGSGFECGVGCDRFANWKEGDIIQGYKLVTKRRTLGP</sequence>
<keyword id="KW-0963">Cytoplasm</keyword>
<keyword id="KW-0342">GTP-binding</keyword>
<keyword id="KW-0396">Initiation factor</keyword>
<keyword id="KW-0547">Nucleotide-binding</keyword>
<keyword id="KW-0648">Protein biosynthesis</keyword>
<keyword id="KW-1185">Reference proteome</keyword>
<evidence type="ECO:0000250" key="1"/>
<evidence type="ECO:0000255" key="2">
    <source>
        <dbReference type="HAMAP-Rule" id="MF_00100"/>
    </source>
</evidence>
<evidence type="ECO:0000256" key="3">
    <source>
        <dbReference type="SAM" id="MobiDB-lite"/>
    </source>
</evidence>